<keyword id="KW-0067">ATP-binding</keyword>
<keyword id="KW-0963">Cytoplasm</keyword>
<keyword id="KW-0418">Kinase</keyword>
<keyword id="KW-0479">Metal-binding</keyword>
<keyword id="KW-0545">Nucleotide biosynthesis</keyword>
<keyword id="KW-0547">Nucleotide-binding</keyword>
<keyword id="KW-0808">Transferase</keyword>
<keyword id="KW-0862">Zinc</keyword>
<evidence type="ECO:0000255" key="1">
    <source>
        <dbReference type="HAMAP-Rule" id="MF_00235"/>
    </source>
</evidence>
<sequence>MNLILMGLPGAGKGTQAEQIVAKYNIPHISTGDMFRAAMKAETEMGLQAKSFIDKGALVPDEVTIGIVRERLSQEDCVRGFLLDGFPRTVAQASALEEIMKDLGKKIDYVLNINVDSGLLLKRLTGRRICKECGATYHLEFNAPAKADVCDKCGGELYQRSDDNEETVANRLDVNIKQTKPLLDFYEELGYLQSINGEQDINKVFADIDVLIGGLA</sequence>
<comment type="function">
    <text evidence="1">Catalyzes the reversible transfer of the terminal phosphate group between ATP and AMP. Plays an important role in cellular energy homeostasis and in adenine nucleotide metabolism.</text>
</comment>
<comment type="catalytic activity">
    <reaction evidence="1">
        <text>AMP + ATP = 2 ADP</text>
        <dbReference type="Rhea" id="RHEA:12973"/>
        <dbReference type="ChEBI" id="CHEBI:30616"/>
        <dbReference type="ChEBI" id="CHEBI:456215"/>
        <dbReference type="ChEBI" id="CHEBI:456216"/>
        <dbReference type="EC" id="2.7.4.3"/>
    </reaction>
</comment>
<comment type="pathway">
    <text evidence="1">Purine metabolism; AMP biosynthesis via salvage pathway; AMP from ADP: step 1/1.</text>
</comment>
<comment type="subunit">
    <text evidence="1">Monomer.</text>
</comment>
<comment type="subcellular location">
    <subcellularLocation>
        <location evidence="1">Cytoplasm</location>
    </subcellularLocation>
</comment>
<comment type="domain">
    <text evidence="1">Consists of three domains, a large central CORE domain and two small peripheral domains, NMPbind and LID, which undergo movements during catalysis. The LID domain closes over the site of phosphoryl transfer upon ATP binding. Assembling and dissambling the active center during each catalytic cycle provides an effective means to prevent ATP hydrolysis. Some bacteria have evolved a zinc-coordinating structure that stabilizes the LID domain.</text>
</comment>
<comment type="similarity">
    <text evidence="1">Belongs to the adenylate kinase family.</text>
</comment>
<reference key="1">
    <citation type="journal article" date="2006" name="J. Bacteriol.">
        <title>Pathogenomic sequence analysis of Bacillus cereus and Bacillus thuringiensis isolates closely related to Bacillus anthracis.</title>
        <authorList>
            <person name="Han C.S."/>
            <person name="Xie G."/>
            <person name="Challacombe J.F."/>
            <person name="Altherr M.R."/>
            <person name="Bhotika S.S."/>
            <person name="Bruce D."/>
            <person name="Campbell C.S."/>
            <person name="Campbell M.L."/>
            <person name="Chen J."/>
            <person name="Chertkov O."/>
            <person name="Cleland C."/>
            <person name="Dimitrijevic M."/>
            <person name="Doggett N.A."/>
            <person name="Fawcett J.J."/>
            <person name="Glavina T."/>
            <person name="Goodwin L.A."/>
            <person name="Hill K.K."/>
            <person name="Hitchcock P."/>
            <person name="Jackson P.J."/>
            <person name="Keim P."/>
            <person name="Kewalramani A.R."/>
            <person name="Longmire J."/>
            <person name="Lucas S."/>
            <person name="Malfatti S."/>
            <person name="McMurry K."/>
            <person name="Meincke L.J."/>
            <person name="Misra M."/>
            <person name="Moseman B.L."/>
            <person name="Mundt M."/>
            <person name="Munk A.C."/>
            <person name="Okinaka R.T."/>
            <person name="Parson-Quintana B."/>
            <person name="Reilly L.P."/>
            <person name="Richardson P."/>
            <person name="Robinson D.L."/>
            <person name="Rubin E."/>
            <person name="Saunders E."/>
            <person name="Tapia R."/>
            <person name="Tesmer J.G."/>
            <person name="Thayer N."/>
            <person name="Thompson L.S."/>
            <person name="Tice H."/>
            <person name="Ticknor L.O."/>
            <person name="Wills P.L."/>
            <person name="Brettin T.S."/>
            <person name="Gilna P."/>
        </authorList>
    </citation>
    <scope>NUCLEOTIDE SEQUENCE [LARGE SCALE GENOMIC DNA]</scope>
    <source>
        <strain>ZK / E33L</strain>
    </source>
</reference>
<name>KAD_BACCZ</name>
<accession>Q63H69</accession>
<dbReference type="EC" id="2.7.4.3" evidence="1"/>
<dbReference type="EMBL" id="CP000001">
    <property type="protein sequence ID" value="AAU20106.1"/>
    <property type="molecule type" value="Genomic_DNA"/>
</dbReference>
<dbReference type="RefSeq" id="WP_001048992.1">
    <property type="nucleotide sequence ID" value="NZ_CP009968.1"/>
</dbReference>
<dbReference type="SMR" id="Q63H69"/>
<dbReference type="KEGG" id="bcz:BCE33L0125"/>
<dbReference type="PATRIC" id="fig|288681.22.peg.26"/>
<dbReference type="UniPathway" id="UPA00588">
    <property type="reaction ID" value="UER00649"/>
</dbReference>
<dbReference type="Proteomes" id="UP000002612">
    <property type="component" value="Chromosome"/>
</dbReference>
<dbReference type="GO" id="GO:0005737">
    <property type="term" value="C:cytoplasm"/>
    <property type="evidence" value="ECO:0007669"/>
    <property type="project" value="UniProtKB-SubCell"/>
</dbReference>
<dbReference type="GO" id="GO:0004017">
    <property type="term" value="F:adenylate kinase activity"/>
    <property type="evidence" value="ECO:0007669"/>
    <property type="project" value="UniProtKB-UniRule"/>
</dbReference>
<dbReference type="GO" id="GO:0005524">
    <property type="term" value="F:ATP binding"/>
    <property type="evidence" value="ECO:0007669"/>
    <property type="project" value="UniProtKB-UniRule"/>
</dbReference>
<dbReference type="GO" id="GO:0008270">
    <property type="term" value="F:zinc ion binding"/>
    <property type="evidence" value="ECO:0007669"/>
    <property type="project" value="UniProtKB-UniRule"/>
</dbReference>
<dbReference type="GO" id="GO:0044209">
    <property type="term" value="P:AMP salvage"/>
    <property type="evidence" value="ECO:0007669"/>
    <property type="project" value="UniProtKB-UniRule"/>
</dbReference>
<dbReference type="CDD" id="cd01428">
    <property type="entry name" value="ADK"/>
    <property type="match status" value="1"/>
</dbReference>
<dbReference type="FunFam" id="3.40.50.300:FF:000106">
    <property type="entry name" value="Adenylate kinase mitochondrial"/>
    <property type="match status" value="1"/>
</dbReference>
<dbReference type="Gene3D" id="3.40.50.300">
    <property type="entry name" value="P-loop containing nucleotide triphosphate hydrolases"/>
    <property type="match status" value="1"/>
</dbReference>
<dbReference type="HAMAP" id="MF_00235">
    <property type="entry name" value="Adenylate_kinase_Adk"/>
    <property type="match status" value="1"/>
</dbReference>
<dbReference type="InterPro" id="IPR006259">
    <property type="entry name" value="Adenyl_kin_sub"/>
</dbReference>
<dbReference type="InterPro" id="IPR000850">
    <property type="entry name" value="Adenylat/UMP-CMP_kin"/>
</dbReference>
<dbReference type="InterPro" id="IPR033690">
    <property type="entry name" value="Adenylat_kinase_CS"/>
</dbReference>
<dbReference type="InterPro" id="IPR007862">
    <property type="entry name" value="Adenylate_kinase_lid-dom"/>
</dbReference>
<dbReference type="InterPro" id="IPR027417">
    <property type="entry name" value="P-loop_NTPase"/>
</dbReference>
<dbReference type="NCBIfam" id="TIGR01351">
    <property type="entry name" value="adk"/>
    <property type="match status" value="1"/>
</dbReference>
<dbReference type="NCBIfam" id="NF001380">
    <property type="entry name" value="PRK00279.1-2"/>
    <property type="match status" value="1"/>
</dbReference>
<dbReference type="NCBIfam" id="NF001381">
    <property type="entry name" value="PRK00279.1-3"/>
    <property type="match status" value="1"/>
</dbReference>
<dbReference type="NCBIfam" id="NF011100">
    <property type="entry name" value="PRK14527.1"/>
    <property type="match status" value="1"/>
</dbReference>
<dbReference type="PANTHER" id="PTHR23359">
    <property type="entry name" value="NUCLEOTIDE KINASE"/>
    <property type="match status" value="1"/>
</dbReference>
<dbReference type="Pfam" id="PF00406">
    <property type="entry name" value="ADK"/>
    <property type="match status" value="1"/>
</dbReference>
<dbReference type="Pfam" id="PF05191">
    <property type="entry name" value="ADK_lid"/>
    <property type="match status" value="1"/>
</dbReference>
<dbReference type="PRINTS" id="PR00094">
    <property type="entry name" value="ADENYLTKNASE"/>
</dbReference>
<dbReference type="SUPFAM" id="SSF52540">
    <property type="entry name" value="P-loop containing nucleoside triphosphate hydrolases"/>
    <property type="match status" value="1"/>
</dbReference>
<dbReference type="PROSITE" id="PS00113">
    <property type="entry name" value="ADENYLATE_KINASE"/>
    <property type="match status" value="1"/>
</dbReference>
<proteinExistence type="inferred from homology"/>
<gene>
    <name evidence="1" type="primary">adk</name>
    <name type="ordered locus">BCE33L0125</name>
</gene>
<protein>
    <recommendedName>
        <fullName evidence="1">Adenylate kinase</fullName>
        <shortName evidence="1">AK</shortName>
        <ecNumber evidence="1">2.7.4.3</ecNumber>
    </recommendedName>
    <alternativeName>
        <fullName evidence="1">ATP-AMP transphosphorylase</fullName>
    </alternativeName>
    <alternativeName>
        <fullName evidence="1">ATP:AMP phosphotransferase</fullName>
    </alternativeName>
    <alternativeName>
        <fullName evidence="1">Adenylate monophosphate kinase</fullName>
    </alternativeName>
</protein>
<feature type="chain" id="PRO_0000158722" description="Adenylate kinase">
    <location>
        <begin position="1"/>
        <end position="216"/>
    </location>
</feature>
<feature type="region of interest" description="NMP" evidence="1">
    <location>
        <begin position="30"/>
        <end position="59"/>
    </location>
</feature>
<feature type="region of interest" description="LID" evidence="1">
    <location>
        <begin position="126"/>
        <end position="163"/>
    </location>
</feature>
<feature type="binding site" evidence="1">
    <location>
        <begin position="10"/>
        <end position="15"/>
    </location>
    <ligand>
        <name>ATP</name>
        <dbReference type="ChEBI" id="CHEBI:30616"/>
    </ligand>
</feature>
<feature type="binding site" evidence="1">
    <location>
        <position position="31"/>
    </location>
    <ligand>
        <name>AMP</name>
        <dbReference type="ChEBI" id="CHEBI:456215"/>
    </ligand>
</feature>
<feature type="binding site" evidence="1">
    <location>
        <position position="36"/>
    </location>
    <ligand>
        <name>AMP</name>
        <dbReference type="ChEBI" id="CHEBI:456215"/>
    </ligand>
</feature>
<feature type="binding site" evidence="1">
    <location>
        <begin position="57"/>
        <end position="59"/>
    </location>
    <ligand>
        <name>AMP</name>
        <dbReference type="ChEBI" id="CHEBI:456215"/>
    </ligand>
</feature>
<feature type="binding site" evidence="1">
    <location>
        <begin position="85"/>
        <end position="88"/>
    </location>
    <ligand>
        <name>AMP</name>
        <dbReference type="ChEBI" id="CHEBI:456215"/>
    </ligand>
</feature>
<feature type="binding site" evidence="1">
    <location>
        <position position="92"/>
    </location>
    <ligand>
        <name>AMP</name>
        <dbReference type="ChEBI" id="CHEBI:456215"/>
    </ligand>
</feature>
<feature type="binding site" evidence="1">
    <location>
        <position position="127"/>
    </location>
    <ligand>
        <name>ATP</name>
        <dbReference type="ChEBI" id="CHEBI:30616"/>
    </ligand>
</feature>
<feature type="binding site" evidence="1">
    <location>
        <position position="130"/>
    </location>
    <ligand>
        <name>Zn(2+)</name>
        <dbReference type="ChEBI" id="CHEBI:29105"/>
        <note>structural</note>
    </ligand>
</feature>
<feature type="binding site" evidence="1">
    <location>
        <position position="133"/>
    </location>
    <ligand>
        <name>Zn(2+)</name>
        <dbReference type="ChEBI" id="CHEBI:29105"/>
        <note>structural</note>
    </ligand>
</feature>
<feature type="binding site" evidence="1">
    <location>
        <begin position="136"/>
        <end position="137"/>
    </location>
    <ligand>
        <name>ATP</name>
        <dbReference type="ChEBI" id="CHEBI:30616"/>
    </ligand>
</feature>
<feature type="binding site" evidence="1">
    <location>
        <position position="150"/>
    </location>
    <ligand>
        <name>Zn(2+)</name>
        <dbReference type="ChEBI" id="CHEBI:29105"/>
        <note>structural</note>
    </ligand>
</feature>
<feature type="binding site" evidence="1">
    <location>
        <position position="153"/>
    </location>
    <ligand>
        <name>Zn(2+)</name>
        <dbReference type="ChEBI" id="CHEBI:29105"/>
        <note>structural</note>
    </ligand>
</feature>
<feature type="binding site" evidence="1">
    <location>
        <position position="160"/>
    </location>
    <ligand>
        <name>AMP</name>
        <dbReference type="ChEBI" id="CHEBI:456215"/>
    </ligand>
</feature>
<feature type="binding site" evidence="1">
    <location>
        <position position="171"/>
    </location>
    <ligand>
        <name>AMP</name>
        <dbReference type="ChEBI" id="CHEBI:456215"/>
    </ligand>
</feature>
<feature type="binding site" evidence="1">
    <location>
        <position position="199"/>
    </location>
    <ligand>
        <name>ATP</name>
        <dbReference type="ChEBI" id="CHEBI:30616"/>
    </ligand>
</feature>
<organism>
    <name type="scientific">Bacillus cereus (strain ZK / E33L)</name>
    <dbReference type="NCBI Taxonomy" id="288681"/>
    <lineage>
        <taxon>Bacteria</taxon>
        <taxon>Bacillati</taxon>
        <taxon>Bacillota</taxon>
        <taxon>Bacilli</taxon>
        <taxon>Bacillales</taxon>
        <taxon>Bacillaceae</taxon>
        <taxon>Bacillus</taxon>
        <taxon>Bacillus cereus group</taxon>
    </lineage>
</organism>